<feature type="chain" id="PRO_0000162754" description="21S rRNA pseudouridine(2819) synthase">
    <location>
        <begin position="1"/>
        <end position="254"/>
    </location>
</feature>
<feature type="active site" evidence="1">
    <location>
        <position position="71"/>
    </location>
</feature>
<organism>
    <name type="scientific">Saccharomyces cerevisiae (strain ATCC 204508 / S288c)</name>
    <name type="common">Baker's yeast</name>
    <dbReference type="NCBI Taxonomy" id="559292"/>
    <lineage>
        <taxon>Eukaryota</taxon>
        <taxon>Fungi</taxon>
        <taxon>Dikarya</taxon>
        <taxon>Ascomycota</taxon>
        <taxon>Saccharomycotina</taxon>
        <taxon>Saccharomycetes</taxon>
        <taxon>Saccharomycetales</taxon>
        <taxon>Saccharomycetaceae</taxon>
        <taxon>Saccharomyces</taxon>
    </lineage>
</organism>
<gene>
    <name type="primary">PUS5</name>
    <name type="ordered locus">YLR165C</name>
</gene>
<accession>Q06244</accession>
<accession>D6VYH1</accession>
<comment type="function">
    <text evidence="2 3">Pseudouridylate synthase responsible for the pseudouridine-2819 formation in mitochondrial 21S rRNA. May modulate the efficiency or the fidelity of the mitochondrial translation machinery.</text>
</comment>
<comment type="catalytic activity">
    <reaction evidence="2 3">
        <text>uridine(2819) in 21S rRNA = pseudouridine(2819) in 21S rRNA</text>
        <dbReference type="Rhea" id="RHEA:42556"/>
        <dbReference type="Rhea" id="RHEA-COMP:10113"/>
        <dbReference type="Rhea" id="RHEA-COMP:10114"/>
        <dbReference type="ChEBI" id="CHEBI:65314"/>
        <dbReference type="ChEBI" id="CHEBI:65315"/>
        <dbReference type="EC" id="5.4.99.43"/>
    </reaction>
</comment>
<comment type="subcellular location">
    <subcellularLocation>
        <location evidence="2">Mitochondrion</location>
    </subcellularLocation>
</comment>
<comment type="similarity">
    <text evidence="4">Belongs to the pseudouridine synthase RluA family.</text>
</comment>
<proteinExistence type="evidence at protein level"/>
<sequence>MSLKKQIPIIFENTHYFIVNKPPGIPSQPPDCRTWGRTHPNLDPTPLLERFKAIYYSHREVELCRTVHRLDHCVTGGMLIAKTKDGSVKFSRFLQKGGNNGYKLQRKYVAIVESSGRFNKPNNYEIKYGPKYNFLISHGGREITKFKEVDENCIVLQLVTGKKHQIRNHVSQILNQPILNDKRHGSTVNFPELFNDQIALHSACIITKIGLQTKTHLIPMEHNNTGQLWSRKYVNEEGEFTLPIKEVLLENWDQ</sequence>
<keyword id="KW-0413">Isomerase</keyword>
<keyword id="KW-0496">Mitochondrion</keyword>
<keyword id="KW-1185">Reference proteome</keyword>
<keyword id="KW-0698">rRNA processing</keyword>
<protein>
    <recommendedName>
        <fullName>21S rRNA pseudouridine(2819) synthase</fullName>
        <ecNumber evidence="2 3">5.4.99.43</ecNumber>
    </recommendedName>
    <alternativeName>
        <fullName>Pseudouridine synthase 5</fullName>
    </alternativeName>
    <alternativeName>
        <fullName>Pseudouridylate synthase PUS5</fullName>
    </alternativeName>
    <alternativeName>
        <fullName>Uracil hydrolyase PUS5</fullName>
    </alternativeName>
</protein>
<dbReference type="EC" id="5.4.99.43" evidence="2 3"/>
<dbReference type="EMBL" id="U51921">
    <property type="protein sequence ID" value="AAB67489.1"/>
    <property type="molecule type" value="Genomic_DNA"/>
</dbReference>
<dbReference type="EMBL" id="AY557942">
    <property type="protein sequence ID" value="AAS56268.1"/>
    <property type="molecule type" value="Genomic_DNA"/>
</dbReference>
<dbReference type="EMBL" id="BK006945">
    <property type="protein sequence ID" value="DAA09487.1"/>
    <property type="molecule type" value="Genomic_DNA"/>
</dbReference>
<dbReference type="PIR" id="S68481">
    <property type="entry name" value="S68481"/>
</dbReference>
<dbReference type="RefSeq" id="NP_013266.1">
    <property type="nucleotide sequence ID" value="NM_001182052.1"/>
</dbReference>
<dbReference type="SMR" id="Q06244"/>
<dbReference type="BioGRID" id="31438">
    <property type="interactions" value="78"/>
</dbReference>
<dbReference type="FunCoup" id="Q06244">
    <property type="interactions" value="120"/>
</dbReference>
<dbReference type="STRING" id="4932.YLR165C"/>
<dbReference type="PaxDb" id="4932-YLR165C"/>
<dbReference type="PeptideAtlas" id="Q06244"/>
<dbReference type="EnsemblFungi" id="YLR165C_mRNA">
    <property type="protein sequence ID" value="YLR165C"/>
    <property type="gene ID" value="YLR165C"/>
</dbReference>
<dbReference type="GeneID" id="850862"/>
<dbReference type="KEGG" id="sce:YLR165C"/>
<dbReference type="AGR" id="SGD:S000004155"/>
<dbReference type="SGD" id="S000004155">
    <property type="gene designation" value="PUS5"/>
</dbReference>
<dbReference type="VEuPathDB" id="FungiDB:YLR165C"/>
<dbReference type="eggNOG" id="KOG1919">
    <property type="taxonomic scope" value="Eukaryota"/>
</dbReference>
<dbReference type="HOGENOM" id="CLU_081037_0_0_1"/>
<dbReference type="InParanoid" id="Q06244"/>
<dbReference type="OMA" id="CIITKIG"/>
<dbReference type="OrthoDB" id="428658at2759"/>
<dbReference type="BioCyc" id="MetaCyc:G3O-32295-MONOMER"/>
<dbReference type="BioCyc" id="YEAST:G3O-32295-MONOMER"/>
<dbReference type="BRENDA" id="4.2.1.70">
    <property type="organism ID" value="984"/>
</dbReference>
<dbReference type="BRENDA" id="5.4.99.43">
    <property type="organism ID" value="984"/>
</dbReference>
<dbReference type="BioGRID-ORCS" id="850862">
    <property type="hits" value="0 hits in 10 CRISPR screens"/>
</dbReference>
<dbReference type="ChiTaRS" id="PUS5">
    <property type="organism name" value="yeast"/>
</dbReference>
<dbReference type="PRO" id="PR:Q06244"/>
<dbReference type="Proteomes" id="UP000002311">
    <property type="component" value="Chromosome XII"/>
</dbReference>
<dbReference type="RNAct" id="Q06244">
    <property type="molecule type" value="protein"/>
</dbReference>
<dbReference type="GO" id="GO:0005739">
    <property type="term" value="C:mitochondrion"/>
    <property type="evidence" value="ECO:0000315"/>
    <property type="project" value="SGD"/>
</dbReference>
<dbReference type="GO" id="GO:0160143">
    <property type="term" value="F:21S rRNA pseudouridine(2819) synthase activity"/>
    <property type="evidence" value="ECO:0007669"/>
    <property type="project" value="UniProtKB-EC"/>
</dbReference>
<dbReference type="GO" id="GO:0009982">
    <property type="term" value="F:pseudouridine synthase activity"/>
    <property type="evidence" value="ECO:0000314"/>
    <property type="project" value="UniProtKB"/>
</dbReference>
<dbReference type="GO" id="GO:0004730">
    <property type="term" value="F:pseudouridylate synthase activity"/>
    <property type="evidence" value="ECO:0000315"/>
    <property type="project" value="SGD"/>
</dbReference>
<dbReference type="GO" id="GO:0003723">
    <property type="term" value="F:RNA binding"/>
    <property type="evidence" value="ECO:0007669"/>
    <property type="project" value="InterPro"/>
</dbReference>
<dbReference type="GO" id="GO:0000455">
    <property type="term" value="P:enzyme-directed rRNA pseudouridine synthesis"/>
    <property type="evidence" value="ECO:0000314"/>
    <property type="project" value="UniProtKB"/>
</dbReference>
<dbReference type="GO" id="GO:0001522">
    <property type="term" value="P:pseudouridine synthesis"/>
    <property type="evidence" value="ECO:0000315"/>
    <property type="project" value="SGD"/>
</dbReference>
<dbReference type="GO" id="GO:0000154">
    <property type="term" value="P:rRNA modification"/>
    <property type="evidence" value="ECO:0000315"/>
    <property type="project" value="SGD"/>
</dbReference>
<dbReference type="CDD" id="cd02869">
    <property type="entry name" value="PseudoU_synth_RluA_like"/>
    <property type="match status" value="1"/>
</dbReference>
<dbReference type="Gene3D" id="3.30.2350.10">
    <property type="entry name" value="Pseudouridine synthase"/>
    <property type="match status" value="1"/>
</dbReference>
<dbReference type="InterPro" id="IPR020103">
    <property type="entry name" value="PsdUridine_synth_cat_dom_sf"/>
</dbReference>
<dbReference type="InterPro" id="IPR006224">
    <property type="entry name" value="PsdUridine_synth_RluA-like_CS"/>
</dbReference>
<dbReference type="InterPro" id="IPR006145">
    <property type="entry name" value="PsdUridine_synth_RsuA/RluA"/>
</dbReference>
<dbReference type="InterPro" id="IPR050188">
    <property type="entry name" value="RluA_PseudoU_synthase"/>
</dbReference>
<dbReference type="PANTHER" id="PTHR21600:SF81">
    <property type="entry name" value="21S RRNA PSEUDOURIDINE(2819) SYNTHASE"/>
    <property type="match status" value="1"/>
</dbReference>
<dbReference type="PANTHER" id="PTHR21600">
    <property type="entry name" value="MITOCHONDRIAL RNA PSEUDOURIDINE SYNTHASE"/>
    <property type="match status" value="1"/>
</dbReference>
<dbReference type="Pfam" id="PF00849">
    <property type="entry name" value="PseudoU_synth_2"/>
    <property type="match status" value="1"/>
</dbReference>
<dbReference type="SUPFAM" id="SSF55120">
    <property type="entry name" value="Pseudouridine synthase"/>
    <property type="match status" value="1"/>
</dbReference>
<dbReference type="PROSITE" id="PS01129">
    <property type="entry name" value="PSI_RLU"/>
    <property type="match status" value="1"/>
</dbReference>
<reference key="1">
    <citation type="journal article" date="1997" name="Nature">
        <title>The nucleotide sequence of Saccharomyces cerevisiae chromosome XII.</title>
        <authorList>
            <person name="Johnston M."/>
            <person name="Hillier L.W."/>
            <person name="Riles L."/>
            <person name="Albermann K."/>
            <person name="Andre B."/>
            <person name="Ansorge W."/>
            <person name="Benes V."/>
            <person name="Brueckner M."/>
            <person name="Delius H."/>
            <person name="Dubois E."/>
            <person name="Duesterhoeft A."/>
            <person name="Entian K.-D."/>
            <person name="Floeth M."/>
            <person name="Goffeau A."/>
            <person name="Hebling U."/>
            <person name="Heumann K."/>
            <person name="Heuss-Neitzel D."/>
            <person name="Hilbert H."/>
            <person name="Hilger F."/>
            <person name="Kleine K."/>
            <person name="Koetter P."/>
            <person name="Louis E.J."/>
            <person name="Messenguy F."/>
            <person name="Mewes H.-W."/>
            <person name="Miosga T."/>
            <person name="Moestl D."/>
            <person name="Mueller-Auer S."/>
            <person name="Nentwich U."/>
            <person name="Obermaier B."/>
            <person name="Piravandi E."/>
            <person name="Pohl T.M."/>
            <person name="Portetelle D."/>
            <person name="Purnelle B."/>
            <person name="Rechmann S."/>
            <person name="Rieger M."/>
            <person name="Rinke M."/>
            <person name="Rose M."/>
            <person name="Scharfe M."/>
            <person name="Scherens B."/>
            <person name="Scholler P."/>
            <person name="Schwager C."/>
            <person name="Schwarz S."/>
            <person name="Underwood A.P."/>
            <person name="Urrestarazu L.A."/>
            <person name="Vandenbol M."/>
            <person name="Verhasselt P."/>
            <person name="Vierendeels F."/>
            <person name="Voet M."/>
            <person name="Volckaert G."/>
            <person name="Voss H."/>
            <person name="Wambutt R."/>
            <person name="Wedler E."/>
            <person name="Wedler H."/>
            <person name="Zimmermann F.K."/>
            <person name="Zollner A."/>
            <person name="Hani J."/>
            <person name="Hoheisel J.D."/>
        </authorList>
    </citation>
    <scope>NUCLEOTIDE SEQUENCE [LARGE SCALE GENOMIC DNA]</scope>
    <source>
        <strain>ATCC 204508 / S288c</strain>
    </source>
</reference>
<reference key="2">
    <citation type="journal article" date="2014" name="G3 (Bethesda)">
        <title>The reference genome sequence of Saccharomyces cerevisiae: Then and now.</title>
        <authorList>
            <person name="Engel S.R."/>
            <person name="Dietrich F.S."/>
            <person name="Fisk D.G."/>
            <person name="Binkley G."/>
            <person name="Balakrishnan R."/>
            <person name="Costanzo M.C."/>
            <person name="Dwight S.S."/>
            <person name="Hitz B.C."/>
            <person name="Karra K."/>
            <person name="Nash R.S."/>
            <person name="Weng S."/>
            <person name="Wong E.D."/>
            <person name="Lloyd P."/>
            <person name="Skrzypek M.S."/>
            <person name="Miyasato S.R."/>
            <person name="Simison M."/>
            <person name="Cherry J.M."/>
        </authorList>
    </citation>
    <scope>GENOME REANNOTATION</scope>
    <source>
        <strain>ATCC 204508 / S288c</strain>
    </source>
</reference>
<reference key="3">
    <citation type="journal article" date="2007" name="Genome Res.">
        <title>Approaching a complete repository of sequence-verified protein-encoding clones for Saccharomyces cerevisiae.</title>
        <authorList>
            <person name="Hu Y."/>
            <person name="Rolfs A."/>
            <person name="Bhullar B."/>
            <person name="Murthy T.V.S."/>
            <person name="Zhu C."/>
            <person name="Berger M.F."/>
            <person name="Camargo A.A."/>
            <person name="Kelley F."/>
            <person name="McCarron S."/>
            <person name="Jepson D."/>
            <person name="Richardson A."/>
            <person name="Raphael J."/>
            <person name="Moreira D."/>
            <person name="Taycher E."/>
            <person name="Zuo D."/>
            <person name="Mohr S."/>
            <person name="Kane M.F."/>
            <person name="Williamson J."/>
            <person name="Simpson A.J.G."/>
            <person name="Bulyk M.L."/>
            <person name="Harlow E."/>
            <person name="Marsischky G."/>
            <person name="Kolodner R.D."/>
            <person name="LaBaer J."/>
        </authorList>
    </citation>
    <scope>NUCLEOTIDE SEQUENCE [GENOMIC DNA]</scope>
    <source>
        <strain>ATCC 204508 / S288c</strain>
    </source>
</reference>
<reference key="4">
    <citation type="journal article" date="2000" name="Nucleic Acids Res.">
        <title>Identification of the Saccharomyces cerevisiae RNA:pseudouridine synthase responsible for formation of psi(2819) in 21S mitochondrial ribosomal RNA.</title>
        <authorList>
            <person name="Ansmant I."/>
            <person name="Massenet S."/>
            <person name="Grosjean H."/>
            <person name="Motorin Y."/>
            <person name="Branlant C."/>
        </authorList>
    </citation>
    <scope>FUNCTION</scope>
    <scope>CATALYTIC ACTIVITY</scope>
    <scope>SUBCELLULAR LOCATION</scope>
</reference>
<reference key="5">
    <citation type="journal article" date="2014" name="Cell">
        <title>Transcriptome-wide mapping reveals widespread dynamic-regulated pseudouridylation of ncRNA and mRNA.</title>
        <authorList>
            <person name="Schwartz S."/>
            <person name="Bernstein D.A."/>
            <person name="Mumbach M.R."/>
            <person name="Jovanovic M."/>
            <person name="Herbst R.H."/>
            <person name="Leon-Ricardo B.X."/>
            <person name="Engreitz J.M."/>
            <person name="Guttman M."/>
            <person name="Satija R."/>
            <person name="Lander E.S."/>
            <person name="Fink G."/>
            <person name="Regev A."/>
        </authorList>
    </citation>
    <scope>FUNCTION</scope>
    <scope>CATALYTIC ACTIVITY</scope>
</reference>
<name>PUS5_YEAST</name>
<evidence type="ECO:0000250" key="1">
    <source>
        <dbReference type="UniProtKB" id="P0AA37"/>
    </source>
</evidence>
<evidence type="ECO:0000269" key="2">
    <source>
    </source>
</evidence>
<evidence type="ECO:0000269" key="3">
    <source>
    </source>
</evidence>
<evidence type="ECO:0000305" key="4"/>